<protein>
    <recommendedName>
        <fullName evidence="1">Argininosuccinate synthase</fullName>
        <ecNumber evidence="1">6.3.4.5</ecNumber>
    </recommendedName>
    <alternativeName>
        <fullName evidence="1">Citrulline--aspartate ligase</fullName>
    </alternativeName>
</protein>
<evidence type="ECO:0000255" key="1">
    <source>
        <dbReference type="HAMAP-Rule" id="MF_00005"/>
    </source>
</evidence>
<proteinExistence type="inferred from homology"/>
<gene>
    <name evidence="1" type="primary">argG</name>
    <name type="ordered locus">RD1_0417</name>
</gene>
<keyword id="KW-0028">Amino-acid biosynthesis</keyword>
<keyword id="KW-0055">Arginine biosynthesis</keyword>
<keyword id="KW-0067">ATP-binding</keyword>
<keyword id="KW-0963">Cytoplasm</keyword>
<keyword id="KW-0436">Ligase</keyword>
<keyword id="KW-0547">Nucleotide-binding</keyword>
<keyword id="KW-1185">Reference proteome</keyword>
<reference key="1">
    <citation type="journal article" date="2007" name="J. Bacteriol.">
        <title>The complete genome sequence of Roseobacter denitrificans reveals a mixotrophic rather than photosynthetic metabolism.</title>
        <authorList>
            <person name="Swingley W.D."/>
            <person name="Sadekar S."/>
            <person name="Mastrian S.D."/>
            <person name="Matthies H.J."/>
            <person name="Hao J."/>
            <person name="Ramos H."/>
            <person name="Acharya C.R."/>
            <person name="Conrad A.L."/>
            <person name="Taylor H.L."/>
            <person name="Dejesa L.C."/>
            <person name="Shah M.K."/>
            <person name="O'Huallachain M.E."/>
            <person name="Lince M.T."/>
            <person name="Blankenship R.E."/>
            <person name="Beatty J.T."/>
            <person name="Touchman J.W."/>
        </authorList>
    </citation>
    <scope>NUCLEOTIDE SEQUENCE [LARGE SCALE GENOMIC DNA]</scope>
    <source>
        <strain>ATCC 33942 / OCh 114</strain>
    </source>
</reference>
<sequence length="406" mass="44852">MSAPKKVVLAYSGGLDTSIILKWLQTEYGCEVVTFTADLGQGEELEPARAKAEMMGASDIYIEDVREEFVRDFVFPMFRANAVYEGLYLLGTSIARPLISKRLVEIAEETGADAIAHGATGKGNDQVRFELAAYALNPDIKVIAPWREWDLSSRTKLIDFAEKNQIPIAKDKRGEAPFSVDANLLHTSSEGKVLENPAVDAPDYVYQRTVNPEDAPDTPEYIEIGFEKGDAVSINGEAMSPATILTKLNEIGGKHGCGRLDLVEGRFVGMKSRGIYETPGGTLLLEAHRGIESITLDRGAMHLKDELMPRYAELIYNGFWFSPERTMLQAAIDASQTHVTGTVRLKLYKGLARTVGRWSDHSLYSEAHVTFEEDAGAYDQTDAAGFIQLNALRLKLLAARDRRLKS</sequence>
<organism>
    <name type="scientific">Roseobacter denitrificans (strain ATCC 33942 / OCh 114)</name>
    <name type="common">Erythrobacter sp. (strain OCh 114)</name>
    <name type="synonym">Roseobacter denitrificans</name>
    <dbReference type="NCBI Taxonomy" id="375451"/>
    <lineage>
        <taxon>Bacteria</taxon>
        <taxon>Pseudomonadati</taxon>
        <taxon>Pseudomonadota</taxon>
        <taxon>Alphaproteobacteria</taxon>
        <taxon>Rhodobacterales</taxon>
        <taxon>Roseobacteraceae</taxon>
        <taxon>Roseobacter</taxon>
    </lineage>
</organism>
<name>ASSY_ROSDO</name>
<dbReference type="EC" id="6.3.4.5" evidence="1"/>
<dbReference type="EMBL" id="CP000362">
    <property type="protein sequence ID" value="ABG30133.1"/>
    <property type="molecule type" value="Genomic_DNA"/>
</dbReference>
<dbReference type="RefSeq" id="WP_011566755.1">
    <property type="nucleotide sequence ID" value="NC_008209.1"/>
</dbReference>
<dbReference type="SMR" id="Q16D10"/>
<dbReference type="STRING" id="375451.RD1_0417"/>
<dbReference type="KEGG" id="rde:RD1_0417"/>
<dbReference type="eggNOG" id="COG0137">
    <property type="taxonomic scope" value="Bacteria"/>
</dbReference>
<dbReference type="HOGENOM" id="CLU_032784_4_2_5"/>
<dbReference type="OrthoDB" id="9801641at2"/>
<dbReference type="UniPathway" id="UPA00068">
    <property type="reaction ID" value="UER00113"/>
</dbReference>
<dbReference type="Proteomes" id="UP000007029">
    <property type="component" value="Chromosome"/>
</dbReference>
<dbReference type="GO" id="GO:0005737">
    <property type="term" value="C:cytoplasm"/>
    <property type="evidence" value="ECO:0007669"/>
    <property type="project" value="UniProtKB-SubCell"/>
</dbReference>
<dbReference type="GO" id="GO:0004055">
    <property type="term" value="F:argininosuccinate synthase activity"/>
    <property type="evidence" value="ECO:0007669"/>
    <property type="project" value="UniProtKB-UniRule"/>
</dbReference>
<dbReference type="GO" id="GO:0005524">
    <property type="term" value="F:ATP binding"/>
    <property type="evidence" value="ECO:0007669"/>
    <property type="project" value="UniProtKB-UniRule"/>
</dbReference>
<dbReference type="GO" id="GO:0000053">
    <property type="term" value="P:argininosuccinate metabolic process"/>
    <property type="evidence" value="ECO:0007669"/>
    <property type="project" value="TreeGrafter"/>
</dbReference>
<dbReference type="GO" id="GO:0006526">
    <property type="term" value="P:L-arginine biosynthetic process"/>
    <property type="evidence" value="ECO:0007669"/>
    <property type="project" value="UniProtKB-UniRule"/>
</dbReference>
<dbReference type="GO" id="GO:0000050">
    <property type="term" value="P:urea cycle"/>
    <property type="evidence" value="ECO:0007669"/>
    <property type="project" value="TreeGrafter"/>
</dbReference>
<dbReference type="CDD" id="cd01999">
    <property type="entry name" value="ASS"/>
    <property type="match status" value="1"/>
</dbReference>
<dbReference type="FunFam" id="3.40.50.620:FF:000019">
    <property type="entry name" value="Argininosuccinate synthase"/>
    <property type="match status" value="1"/>
</dbReference>
<dbReference type="FunFam" id="3.90.1260.10:FF:000007">
    <property type="entry name" value="Argininosuccinate synthase"/>
    <property type="match status" value="1"/>
</dbReference>
<dbReference type="Gene3D" id="3.90.1260.10">
    <property type="entry name" value="Argininosuccinate synthetase, chain A, domain 2"/>
    <property type="match status" value="1"/>
</dbReference>
<dbReference type="Gene3D" id="3.40.50.620">
    <property type="entry name" value="HUPs"/>
    <property type="match status" value="1"/>
</dbReference>
<dbReference type="Gene3D" id="1.20.5.470">
    <property type="entry name" value="Single helix bin"/>
    <property type="match status" value="1"/>
</dbReference>
<dbReference type="HAMAP" id="MF_00005">
    <property type="entry name" value="Arg_succ_synth_type1"/>
    <property type="match status" value="1"/>
</dbReference>
<dbReference type="InterPro" id="IPR048268">
    <property type="entry name" value="Arginosuc_syn_C"/>
</dbReference>
<dbReference type="InterPro" id="IPR048267">
    <property type="entry name" value="Arginosuc_syn_N"/>
</dbReference>
<dbReference type="InterPro" id="IPR001518">
    <property type="entry name" value="Arginosuc_synth"/>
</dbReference>
<dbReference type="InterPro" id="IPR018223">
    <property type="entry name" value="Arginosuc_synth_CS"/>
</dbReference>
<dbReference type="InterPro" id="IPR023434">
    <property type="entry name" value="Arginosuc_synth_type_1_subfam"/>
</dbReference>
<dbReference type="InterPro" id="IPR024074">
    <property type="entry name" value="AS_cat/multimer_dom_body"/>
</dbReference>
<dbReference type="InterPro" id="IPR014729">
    <property type="entry name" value="Rossmann-like_a/b/a_fold"/>
</dbReference>
<dbReference type="NCBIfam" id="TIGR00032">
    <property type="entry name" value="argG"/>
    <property type="match status" value="1"/>
</dbReference>
<dbReference type="NCBIfam" id="NF001770">
    <property type="entry name" value="PRK00509.1"/>
    <property type="match status" value="1"/>
</dbReference>
<dbReference type="PANTHER" id="PTHR11587">
    <property type="entry name" value="ARGININOSUCCINATE SYNTHASE"/>
    <property type="match status" value="1"/>
</dbReference>
<dbReference type="PANTHER" id="PTHR11587:SF2">
    <property type="entry name" value="ARGININOSUCCINATE SYNTHASE"/>
    <property type="match status" value="1"/>
</dbReference>
<dbReference type="Pfam" id="PF20979">
    <property type="entry name" value="Arginosuc_syn_C"/>
    <property type="match status" value="1"/>
</dbReference>
<dbReference type="Pfam" id="PF00764">
    <property type="entry name" value="Arginosuc_synth"/>
    <property type="match status" value="1"/>
</dbReference>
<dbReference type="SUPFAM" id="SSF52402">
    <property type="entry name" value="Adenine nucleotide alpha hydrolases-like"/>
    <property type="match status" value="1"/>
</dbReference>
<dbReference type="SUPFAM" id="SSF69864">
    <property type="entry name" value="Argininosuccinate synthetase, C-terminal domain"/>
    <property type="match status" value="1"/>
</dbReference>
<dbReference type="PROSITE" id="PS00564">
    <property type="entry name" value="ARGININOSUCCIN_SYN_1"/>
    <property type="match status" value="1"/>
</dbReference>
<dbReference type="PROSITE" id="PS00565">
    <property type="entry name" value="ARGININOSUCCIN_SYN_2"/>
    <property type="match status" value="1"/>
</dbReference>
<comment type="catalytic activity">
    <reaction evidence="1">
        <text>L-citrulline + L-aspartate + ATP = 2-(N(omega)-L-arginino)succinate + AMP + diphosphate + H(+)</text>
        <dbReference type="Rhea" id="RHEA:10932"/>
        <dbReference type="ChEBI" id="CHEBI:15378"/>
        <dbReference type="ChEBI" id="CHEBI:29991"/>
        <dbReference type="ChEBI" id="CHEBI:30616"/>
        <dbReference type="ChEBI" id="CHEBI:33019"/>
        <dbReference type="ChEBI" id="CHEBI:57472"/>
        <dbReference type="ChEBI" id="CHEBI:57743"/>
        <dbReference type="ChEBI" id="CHEBI:456215"/>
        <dbReference type="EC" id="6.3.4.5"/>
    </reaction>
</comment>
<comment type="pathway">
    <text evidence="1">Amino-acid biosynthesis; L-arginine biosynthesis; L-arginine from L-ornithine and carbamoyl phosphate: step 2/3.</text>
</comment>
<comment type="subunit">
    <text evidence="1">Homotetramer.</text>
</comment>
<comment type="subcellular location">
    <subcellularLocation>
        <location evidence="1">Cytoplasm</location>
    </subcellularLocation>
</comment>
<comment type="similarity">
    <text evidence="1">Belongs to the argininosuccinate synthase family. Type 1 subfamily.</text>
</comment>
<feature type="chain" id="PRO_0000263966" description="Argininosuccinate synthase">
    <location>
        <begin position="1"/>
        <end position="406"/>
    </location>
</feature>
<feature type="binding site" evidence="1">
    <location>
        <begin position="10"/>
        <end position="18"/>
    </location>
    <ligand>
        <name>ATP</name>
        <dbReference type="ChEBI" id="CHEBI:30616"/>
    </ligand>
</feature>
<feature type="binding site" evidence="1">
    <location>
        <position position="37"/>
    </location>
    <ligand>
        <name>ATP</name>
        <dbReference type="ChEBI" id="CHEBI:30616"/>
    </ligand>
</feature>
<feature type="binding site" evidence="1">
    <location>
        <position position="88"/>
    </location>
    <ligand>
        <name>L-citrulline</name>
        <dbReference type="ChEBI" id="CHEBI:57743"/>
    </ligand>
</feature>
<feature type="binding site" evidence="1">
    <location>
        <position position="93"/>
    </location>
    <ligand>
        <name>L-citrulline</name>
        <dbReference type="ChEBI" id="CHEBI:57743"/>
    </ligand>
</feature>
<feature type="binding site" evidence="1">
    <location>
        <position position="118"/>
    </location>
    <ligand>
        <name>ATP</name>
        <dbReference type="ChEBI" id="CHEBI:30616"/>
    </ligand>
</feature>
<feature type="binding site" evidence="1">
    <location>
        <position position="120"/>
    </location>
    <ligand>
        <name>L-aspartate</name>
        <dbReference type="ChEBI" id="CHEBI:29991"/>
    </ligand>
</feature>
<feature type="binding site" evidence="1">
    <location>
        <position position="124"/>
    </location>
    <ligand>
        <name>L-aspartate</name>
        <dbReference type="ChEBI" id="CHEBI:29991"/>
    </ligand>
</feature>
<feature type="binding site" evidence="1">
    <location>
        <position position="124"/>
    </location>
    <ligand>
        <name>L-citrulline</name>
        <dbReference type="ChEBI" id="CHEBI:57743"/>
    </ligand>
</feature>
<feature type="binding site" evidence="1">
    <location>
        <position position="125"/>
    </location>
    <ligand>
        <name>L-aspartate</name>
        <dbReference type="ChEBI" id="CHEBI:29991"/>
    </ligand>
</feature>
<feature type="binding site" evidence="1">
    <location>
        <position position="128"/>
    </location>
    <ligand>
        <name>L-citrulline</name>
        <dbReference type="ChEBI" id="CHEBI:57743"/>
    </ligand>
</feature>
<feature type="binding site" evidence="1">
    <location>
        <position position="179"/>
    </location>
    <ligand>
        <name>L-citrulline</name>
        <dbReference type="ChEBI" id="CHEBI:57743"/>
    </ligand>
</feature>
<feature type="binding site" evidence="1">
    <location>
        <position position="188"/>
    </location>
    <ligand>
        <name>L-citrulline</name>
        <dbReference type="ChEBI" id="CHEBI:57743"/>
    </ligand>
</feature>
<feature type="binding site" evidence="1">
    <location>
        <position position="264"/>
    </location>
    <ligand>
        <name>L-citrulline</name>
        <dbReference type="ChEBI" id="CHEBI:57743"/>
    </ligand>
</feature>
<feature type="binding site" evidence="1">
    <location>
        <position position="276"/>
    </location>
    <ligand>
        <name>L-citrulline</name>
        <dbReference type="ChEBI" id="CHEBI:57743"/>
    </ligand>
</feature>
<accession>Q16D10</accession>